<gene>
    <name type="primary">mrps-23</name>
    <name type="ORF">ZK1098.7</name>
</gene>
<organism>
    <name type="scientific">Caenorhabditis elegans</name>
    <dbReference type="NCBI Taxonomy" id="6239"/>
    <lineage>
        <taxon>Eukaryota</taxon>
        <taxon>Metazoa</taxon>
        <taxon>Ecdysozoa</taxon>
        <taxon>Nematoda</taxon>
        <taxon>Chromadorea</taxon>
        <taxon>Rhabditida</taxon>
        <taxon>Rhabditina</taxon>
        <taxon>Rhabditomorpha</taxon>
        <taxon>Rhabditoidea</taxon>
        <taxon>Rhabditidae</taxon>
        <taxon>Peloderinae</taxon>
        <taxon>Caenorhabditis</taxon>
    </lineage>
</organism>
<comment type="subunit">
    <text evidence="1">Component of the mitochondrial ribosome small subunit (28S) which comprises a 12S rRNA and about 30 distinct proteins.</text>
</comment>
<comment type="subcellular location">
    <subcellularLocation>
        <location evidence="1">Mitochondrion</location>
    </subcellularLocation>
</comment>
<comment type="similarity">
    <text evidence="2">Belongs to the mitochondrion-specific ribosomal protein mS23 family.</text>
</comment>
<protein>
    <recommendedName>
        <fullName evidence="2">Small ribosomal subunit protein mS23</fullName>
    </recommendedName>
    <alternativeName>
        <fullName evidence="2">28S ribosomal protein S23, mitochondrial</fullName>
    </alternativeName>
</protein>
<dbReference type="EMBL" id="Z22176">
    <property type="protein sequence ID" value="CAA80139.1"/>
    <property type="molecule type" value="Genomic_DNA"/>
</dbReference>
<dbReference type="PIR" id="G88557">
    <property type="entry name" value="G88557"/>
</dbReference>
<dbReference type="RefSeq" id="NP_499099.1">
    <property type="nucleotide sequence ID" value="NM_066698.10"/>
</dbReference>
<dbReference type="SMR" id="P34748"/>
<dbReference type="BioGRID" id="56055">
    <property type="interactions" value="3"/>
</dbReference>
<dbReference type="FunCoup" id="P34748">
    <property type="interactions" value="1465"/>
</dbReference>
<dbReference type="STRING" id="6239.ZK1098.7.2"/>
<dbReference type="PaxDb" id="6239-ZK1098.7"/>
<dbReference type="PeptideAtlas" id="P34748"/>
<dbReference type="EnsemblMetazoa" id="ZK1098.7.1">
    <property type="protein sequence ID" value="ZK1098.7.1"/>
    <property type="gene ID" value="WBGene00014224"/>
</dbReference>
<dbReference type="GeneID" id="191523"/>
<dbReference type="KEGG" id="cel:CELE_ZK1098.7"/>
<dbReference type="UCSC" id="ZK1098.7">
    <property type="organism name" value="c. elegans"/>
</dbReference>
<dbReference type="AGR" id="WB:WBGene00014224"/>
<dbReference type="CTD" id="191523"/>
<dbReference type="WormBase" id="ZK1098.7">
    <property type="protein sequence ID" value="CE00566"/>
    <property type="gene ID" value="WBGene00014224"/>
    <property type="gene designation" value="mrps-23"/>
</dbReference>
<dbReference type="eggNOG" id="ENOG502RZIC">
    <property type="taxonomic scope" value="Eukaryota"/>
</dbReference>
<dbReference type="GeneTree" id="ENSGT00390000009030"/>
<dbReference type="HOGENOM" id="CLU_113868_0_0_1"/>
<dbReference type="InParanoid" id="P34748"/>
<dbReference type="OMA" id="TEDKPIW"/>
<dbReference type="PhylomeDB" id="P34748"/>
<dbReference type="Reactome" id="R-CEL-5389840">
    <property type="pathway name" value="Mitochondrial translation elongation"/>
</dbReference>
<dbReference type="Reactome" id="R-CEL-5419276">
    <property type="pathway name" value="Mitochondrial translation termination"/>
</dbReference>
<dbReference type="PRO" id="PR:P34748"/>
<dbReference type="Proteomes" id="UP000001940">
    <property type="component" value="Chromosome III"/>
</dbReference>
<dbReference type="Bgee" id="WBGene00014224">
    <property type="expression patterns" value="Expressed in germ line (C elegans) and 4 other cell types or tissues"/>
</dbReference>
<dbReference type="GO" id="GO:0005763">
    <property type="term" value="C:mitochondrial small ribosomal subunit"/>
    <property type="evidence" value="ECO:0000250"/>
    <property type="project" value="UniProtKB"/>
</dbReference>
<dbReference type="GO" id="GO:0005739">
    <property type="term" value="C:mitochondrion"/>
    <property type="evidence" value="ECO:0000318"/>
    <property type="project" value="GO_Central"/>
</dbReference>
<dbReference type="GO" id="GO:0003735">
    <property type="term" value="F:structural constituent of ribosome"/>
    <property type="evidence" value="ECO:0007669"/>
    <property type="project" value="InterPro"/>
</dbReference>
<dbReference type="GO" id="GO:0006412">
    <property type="term" value="P:translation"/>
    <property type="evidence" value="ECO:0007669"/>
    <property type="project" value="InterPro"/>
</dbReference>
<dbReference type="CDD" id="cd23701">
    <property type="entry name" value="At1g26750"/>
    <property type="match status" value="1"/>
</dbReference>
<dbReference type="InterPro" id="IPR023611">
    <property type="entry name" value="Ribosomal_mS23_dom"/>
</dbReference>
<dbReference type="InterPro" id="IPR019520">
    <property type="entry name" value="Ribosomal_mS23_met"/>
</dbReference>
<dbReference type="PANTHER" id="PTHR15925">
    <property type="entry name" value="MITOCHONDRIAL RIBOSOMAL PROTEIN S23"/>
    <property type="match status" value="1"/>
</dbReference>
<dbReference type="PANTHER" id="PTHR15925:SF2">
    <property type="entry name" value="SMALL RIBOSOMAL SUBUNIT PROTEIN MS23"/>
    <property type="match status" value="1"/>
</dbReference>
<dbReference type="Pfam" id="PF10484">
    <property type="entry name" value="MRP-S23"/>
    <property type="match status" value="1"/>
</dbReference>
<sequence length="133" mass="15392">MASFITRAERSGNIFSRVTGLIRAGQLNWADRPLWYDVYVSSPPLTPPDWNVKLAKYDEPIRSIFYEEDVLRAKFYKTYRSTAGIQVDSSRTSVSQQFINEYKLVKSENAEATDDQLFEMTQKRLNENGIVLK</sequence>
<proteinExistence type="inferred from homology"/>
<reference key="1">
    <citation type="journal article" date="1994" name="Nature">
        <title>2.2 Mb of contiguous nucleotide sequence from chromosome III of C. elegans.</title>
        <authorList>
            <person name="Wilson R."/>
            <person name="Ainscough R."/>
            <person name="Anderson K."/>
            <person name="Baynes C."/>
            <person name="Berks M."/>
            <person name="Bonfield J."/>
            <person name="Burton J."/>
            <person name="Connell M."/>
            <person name="Copsey T."/>
            <person name="Cooper J."/>
            <person name="Coulson A."/>
            <person name="Craxton M."/>
            <person name="Dear S."/>
            <person name="Du Z."/>
            <person name="Durbin R."/>
            <person name="Favello A."/>
            <person name="Fraser A."/>
            <person name="Fulton L."/>
            <person name="Gardner A."/>
            <person name="Green P."/>
            <person name="Hawkins T."/>
            <person name="Hillier L."/>
            <person name="Jier M."/>
            <person name="Johnston L."/>
            <person name="Jones M."/>
            <person name="Kershaw J."/>
            <person name="Kirsten J."/>
            <person name="Laisster N."/>
            <person name="Latreille P."/>
            <person name="Lightning J."/>
            <person name="Lloyd C."/>
            <person name="Mortimore B."/>
            <person name="O'Callaghan M."/>
            <person name="Parsons J."/>
            <person name="Percy C."/>
            <person name="Rifken L."/>
            <person name="Roopra A."/>
            <person name="Saunders D."/>
            <person name="Shownkeen R."/>
            <person name="Sims M."/>
            <person name="Smaldon N."/>
            <person name="Smith A."/>
            <person name="Smith M."/>
            <person name="Sonnhammer E."/>
            <person name="Staden R."/>
            <person name="Sulston J."/>
            <person name="Thierry-Mieg J."/>
            <person name="Thomas K."/>
            <person name="Vaudin M."/>
            <person name="Vaughan K."/>
            <person name="Waterston R."/>
            <person name="Watson A."/>
            <person name="Weinstock L."/>
            <person name="Wilkinson-Sproat J."/>
            <person name="Wohldman P."/>
        </authorList>
    </citation>
    <scope>NUCLEOTIDE SEQUENCE [LARGE SCALE GENOMIC DNA]</scope>
    <source>
        <strain>Bristol N2</strain>
    </source>
</reference>
<reference key="2">
    <citation type="journal article" date="1998" name="Science">
        <title>Genome sequence of the nematode C. elegans: a platform for investigating biology.</title>
        <authorList>
            <consortium name="The C. elegans sequencing consortium"/>
        </authorList>
    </citation>
    <scope>NUCLEOTIDE SEQUENCE [LARGE SCALE GENOMIC DNA]</scope>
    <source>
        <strain>Bristol N2</strain>
    </source>
</reference>
<name>RT23_CAEEL</name>
<accession>P34748</accession>
<feature type="chain" id="PRO_0000065559" description="Small ribosomal subunit protein mS23">
    <location>
        <begin position="1"/>
        <end position="133"/>
    </location>
</feature>
<evidence type="ECO:0000250" key="1">
    <source>
        <dbReference type="UniProtKB" id="Q2NL27"/>
    </source>
</evidence>
<evidence type="ECO:0000305" key="2"/>
<keyword id="KW-0496">Mitochondrion</keyword>
<keyword id="KW-1185">Reference proteome</keyword>
<keyword id="KW-0687">Ribonucleoprotein</keyword>
<keyword id="KW-0689">Ribosomal protein</keyword>